<sequence length="572" mass="64043">MLGLLTITSVFRNWRNSLQRKEDYDECHMRGINNENEISGKSEKNFKLDEPPISLETVMAEFKLSNETLRRMMAHMSRNMDKGLEGGPENSTISMLPSFVPELPNGTEEGRFIAMDLGGTNLRVMLMDIKPGEELKTEQFNTRIPNWAMRGTGEQLFDYITKCLAEFLIEKGIENDGLPVGFTFSYPCDQKSLRSATLLRWTKGFETTGVVGEDVVELLEQSIARRGDIKVEVVALINDTVGTMVAAAHESGGECHIGVIIATGTNASYMEDTSKIKYGLSKAIAAYNYPEMIIDTEWGGFGDRSEADYILTQYDKIVDSRSEHPGVNTFDKLVGGKCMGEVVRVVLEKLTRARVLFNGKGSDALFQQDSFPTKYISEILRDESGSYVHTRDILGELGIDHYSFSDMLLLREVCVVVSRRSANLGAAAIACVLNRVRKQNMVVGIDGSTYKYHPFFDFWVHDKLKELVDPGLKFKLLQTADGSGKGAALITAIVARLKKRNLKQQQQQQQQQQQHVTMVEQNVVEQIAETKGSREQFMNGNQKINLVTNDIPIYDSFNGDIENGVIHLSTDH</sequence>
<protein>
    <recommendedName>
        <fullName evidence="6">Hexokinase</fullName>
        <shortName evidence="6">BmHK</shortName>
        <ecNumber evidence="5">2.7.1.1</ecNumber>
    </recommendedName>
</protein>
<evidence type="ECO:0000250" key="1">
    <source>
        <dbReference type="UniProtKB" id="P19367"/>
    </source>
</evidence>
<evidence type="ECO:0000255" key="2"/>
<evidence type="ECO:0000255" key="3">
    <source>
        <dbReference type="PROSITE-ProRule" id="PRU01084"/>
    </source>
</evidence>
<evidence type="ECO:0000255" key="4">
    <source>
        <dbReference type="RuleBase" id="RU362007"/>
    </source>
</evidence>
<evidence type="ECO:0000269" key="5">
    <source>
    </source>
</evidence>
<evidence type="ECO:0000303" key="6">
    <source>
    </source>
</evidence>
<evidence type="ECO:0000305" key="7"/>
<evidence type="ECO:0000312" key="8">
    <source>
        <dbReference type="EMBL" id="AAR13363.1"/>
    </source>
</evidence>
<evidence type="ECO:0000312" key="9">
    <source>
        <dbReference type="EMBL" id="CRZ23240.1"/>
    </source>
</evidence>
<dbReference type="EC" id="2.7.1.1" evidence="5"/>
<dbReference type="EMBL" id="AY341346">
    <property type="protein sequence ID" value="AAR13363.1"/>
    <property type="molecule type" value="mRNA"/>
</dbReference>
<dbReference type="EMBL" id="LN856840">
    <property type="protein sequence ID" value="CRZ23240.1"/>
    <property type="molecule type" value="Genomic_DNA"/>
</dbReference>
<dbReference type="SMR" id="A0A0K0JFP3"/>
<dbReference type="FunCoup" id="A0A0K0JFP3">
    <property type="interactions" value="337"/>
</dbReference>
<dbReference type="STRING" id="6279.A0A0K0JFP3"/>
<dbReference type="EnsemblMetazoa" id="Bm4678.1">
    <property type="protein sequence ID" value="Bm4678.1"/>
    <property type="gene ID" value="WBGene00224939"/>
</dbReference>
<dbReference type="WormBase" id="Bm4678">
    <property type="protein sequence ID" value="BM38607"/>
    <property type="gene ID" value="WBGene00224939"/>
    <property type="gene designation" value="Bma-hxk-2"/>
</dbReference>
<dbReference type="InParanoid" id="A0A0K0JFP3"/>
<dbReference type="OrthoDB" id="419537at2759"/>
<dbReference type="BRENDA" id="2.7.1.1">
    <property type="organism ID" value="997"/>
</dbReference>
<dbReference type="UniPathway" id="UPA00109">
    <property type="reaction ID" value="UER00180"/>
</dbReference>
<dbReference type="UniPathway" id="UPA00242"/>
<dbReference type="Proteomes" id="UP000006672">
    <property type="component" value="Unassembled WGS sequence"/>
</dbReference>
<dbReference type="GO" id="GO:0005829">
    <property type="term" value="C:cytosol"/>
    <property type="evidence" value="ECO:0007669"/>
    <property type="project" value="TreeGrafter"/>
</dbReference>
<dbReference type="GO" id="GO:0005739">
    <property type="term" value="C:mitochondrion"/>
    <property type="evidence" value="ECO:0007669"/>
    <property type="project" value="TreeGrafter"/>
</dbReference>
<dbReference type="GO" id="GO:0005524">
    <property type="term" value="F:ATP binding"/>
    <property type="evidence" value="ECO:0007669"/>
    <property type="project" value="UniProtKB-KW"/>
</dbReference>
<dbReference type="GO" id="GO:0005536">
    <property type="term" value="F:D-glucose binding"/>
    <property type="evidence" value="ECO:0007669"/>
    <property type="project" value="InterPro"/>
</dbReference>
<dbReference type="GO" id="GO:0008865">
    <property type="term" value="F:fructokinase activity"/>
    <property type="evidence" value="ECO:0007669"/>
    <property type="project" value="TreeGrafter"/>
</dbReference>
<dbReference type="GO" id="GO:0004340">
    <property type="term" value="F:glucokinase activity"/>
    <property type="evidence" value="ECO:0007669"/>
    <property type="project" value="TreeGrafter"/>
</dbReference>
<dbReference type="GO" id="GO:0019158">
    <property type="term" value="F:mannokinase activity"/>
    <property type="evidence" value="ECO:0007669"/>
    <property type="project" value="RHEA"/>
</dbReference>
<dbReference type="GO" id="GO:0006006">
    <property type="term" value="P:glucose metabolic process"/>
    <property type="evidence" value="ECO:0007669"/>
    <property type="project" value="TreeGrafter"/>
</dbReference>
<dbReference type="GO" id="GO:0006096">
    <property type="term" value="P:glycolytic process"/>
    <property type="evidence" value="ECO:0007669"/>
    <property type="project" value="UniProtKB-UniPathway"/>
</dbReference>
<dbReference type="GO" id="GO:0019318">
    <property type="term" value="P:hexose metabolic process"/>
    <property type="evidence" value="ECO:0000314"/>
    <property type="project" value="UniProtKB"/>
</dbReference>
<dbReference type="GO" id="GO:0001678">
    <property type="term" value="P:intracellular glucose homeostasis"/>
    <property type="evidence" value="ECO:0007669"/>
    <property type="project" value="InterPro"/>
</dbReference>
<dbReference type="CDD" id="cd24019">
    <property type="entry name" value="ASKHA_NBD_HK_meta"/>
    <property type="match status" value="1"/>
</dbReference>
<dbReference type="FunFam" id="3.30.420.40:FF:000209">
    <property type="entry name" value="Phosphotransferase"/>
    <property type="match status" value="1"/>
</dbReference>
<dbReference type="FunFam" id="3.40.367.20:FF:000005">
    <property type="entry name" value="Phosphotransferase"/>
    <property type="match status" value="1"/>
</dbReference>
<dbReference type="Gene3D" id="3.30.420.40">
    <property type="match status" value="1"/>
</dbReference>
<dbReference type="Gene3D" id="3.40.367.20">
    <property type="match status" value="1"/>
</dbReference>
<dbReference type="InterPro" id="IPR043129">
    <property type="entry name" value="ATPase_NBD"/>
</dbReference>
<dbReference type="InterPro" id="IPR001312">
    <property type="entry name" value="Hexokinase"/>
</dbReference>
<dbReference type="InterPro" id="IPR022673">
    <property type="entry name" value="Hexokinase_C"/>
</dbReference>
<dbReference type="InterPro" id="IPR022672">
    <property type="entry name" value="Hexokinase_N"/>
</dbReference>
<dbReference type="PANTHER" id="PTHR19443">
    <property type="entry name" value="HEXOKINASE"/>
    <property type="match status" value="1"/>
</dbReference>
<dbReference type="PANTHER" id="PTHR19443:SF77">
    <property type="entry name" value="PHOSPHOTRANSFERASE"/>
    <property type="match status" value="1"/>
</dbReference>
<dbReference type="Pfam" id="PF00349">
    <property type="entry name" value="Hexokinase_1"/>
    <property type="match status" value="1"/>
</dbReference>
<dbReference type="Pfam" id="PF03727">
    <property type="entry name" value="Hexokinase_2"/>
    <property type="match status" value="1"/>
</dbReference>
<dbReference type="PRINTS" id="PR00475">
    <property type="entry name" value="HEXOKINASE"/>
</dbReference>
<dbReference type="SUPFAM" id="SSF53067">
    <property type="entry name" value="Actin-like ATPase domain"/>
    <property type="match status" value="2"/>
</dbReference>
<dbReference type="PROSITE" id="PS51748">
    <property type="entry name" value="HEXOKINASE_2"/>
    <property type="match status" value="1"/>
</dbReference>
<name>HXK_BRUMA</name>
<gene>
    <name evidence="9" type="ORF">Bm4678</name>
</gene>
<organism>
    <name type="scientific">Brugia malayi</name>
    <name type="common">Filarial nematode worm</name>
    <dbReference type="NCBI Taxonomy" id="6279"/>
    <lineage>
        <taxon>Eukaryota</taxon>
        <taxon>Metazoa</taxon>
        <taxon>Ecdysozoa</taxon>
        <taxon>Nematoda</taxon>
        <taxon>Chromadorea</taxon>
        <taxon>Rhabditida</taxon>
        <taxon>Spirurina</taxon>
        <taxon>Spiruromorpha</taxon>
        <taxon>Filarioidea</taxon>
        <taxon>Onchocercidae</taxon>
        <taxon>Brugia</taxon>
    </lineage>
</organism>
<reference evidence="8" key="1">
    <citation type="journal article" date="2008" name="Parasitol. Int.">
        <title>Molecular cloning and characterization of Brugia malayi hexokinase.</title>
        <authorList>
            <person name="Singh A.R."/>
            <person name="Joshi S."/>
            <person name="Arya R."/>
            <person name="Kayastha A.M."/>
            <person name="Srivastava K.K."/>
            <person name="Tripathi L.M."/>
            <person name="Saxena J.K."/>
        </authorList>
    </citation>
    <scope>NUCLEOTIDE SEQUENCE [MRNA]</scope>
    <scope>FUNCTION</scope>
    <scope>CATALYTIC ACTIVITY</scope>
    <scope>ACTIVITY REGULATION</scope>
    <scope>BIOPHYSICOCHEMICAL PROPERTIES</scope>
    <scope>PATHWAY</scope>
</reference>
<reference evidence="9" key="2">
    <citation type="journal article" date="2007" name="Science">
        <title>Draft genome of the filarial nematode parasite Brugia malayi.</title>
        <authorList>
            <person name="Ghedin E."/>
            <person name="Wang S."/>
            <person name="Spiro D."/>
            <person name="Caler E."/>
            <person name="Zhao Q."/>
            <person name="Crabtree J."/>
            <person name="Allen J.E."/>
            <person name="Delcher A.L."/>
            <person name="Guiliano D.B."/>
            <person name="Miranda-Saavedra D."/>
            <person name="Angiuoli S.V."/>
            <person name="Creasy T."/>
            <person name="Amedeo P."/>
            <person name="Haas B."/>
            <person name="El-Sayed N.M."/>
            <person name="Wortman J.R."/>
            <person name="Feldblyum T."/>
            <person name="Tallon L."/>
            <person name="Schatz M."/>
            <person name="Shumway M."/>
            <person name="Koo H."/>
            <person name="Salzberg S.L."/>
            <person name="Schobel S."/>
            <person name="Pertea M."/>
            <person name="Pop M."/>
            <person name="White O."/>
            <person name="Barton G.J."/>
            <person name="Carlow C.K.S."/>
            <person name="Crawford M.J."/>
            <person name="Daub J."/>
            <person name="Dimmic M.W."/>
            <person name="Estes C.F."/>
            <person name="Foster J.M."/>
            <person name="Ganatra M."/>
            <person name="Gregory W.F."/>
            <person name="Johnson N.M."/>
            <person name="Jin J."/>
            <person name="Komuniecki R."/>
            <person name="Korf I."/>
            <person name="Kumar S."/>
            <person name="Laney S."/>
            <person name="Li B.-W."/>
            <person name="Li W."/>
            <person name="Lindblom T.H."/>
            <person name="Lustigman S."/>
            <person name="Ma D."/>
            <person name="Maina C.V."/>
            <person name="Martin D.M."/>
            <person name="McCarter J.P."/>
            <person name="McReynolds L."/>
            <person name="Mitreva M."/>
            <person name="Nutman T.B."/>
            <person name="Parkinson J."/>
            <person name="Peregrin-Alvarez J.M."/>
            <person name="Poole C."/>
            <person name="Ren Q."/>
            <person name="Saunders L."/>
            <person name="Sluder A.E."/>
            <person name="Smith K."/>
            <person name="Stanke M."/>
            <person name="Unnasch T.R."/>
            <person name="Ware J."/>
            <person name="Wei A.D."/>
            <person name="Weil G."/>
            <person name="Williams D.J."/>
            <person name="Zhang Y."/>
            <person name="Williams S.A."/>
            <person name="Fraser-Liggett C."/>
            <person name="Slatko B."/>
            <person name="Blaxter M.L."/>
            <person name="Scott A.L."/>
        </authorList>
    </citation>
    <scope>NUCLEOTIDE SEQUENCE [LARGE SCALE MRNA]</scope>
    <source>
        <strain evidence="9">FR3</strain>
    </source>
</reference>
<feature type="chain" id="PRO_0000437173" description="Hexokinase" evidence="7">
    <location>
        <begin position="1"/>
        <end position="572"/>
    </location>
</feature>
<feature type="domain" description="Hexokinase" evidence="3">
    <location>
        <begin position="49"/>
        <end position="492"/>
    </location>
</feature>
<feature type="region of interest" description="Hexokinase small subdomain" evidence="3">
    <location>
        <begin position="105"/>
        <end position="237"/>
    </location>
</feature>
<feature type="region of interest" description="Hexokinase large subdomain" evidence="3">
    <location>
        <begin position="238"/>
        <end position="481"/>
    </location>
</feature>
<feature type="binding site" evidence="1">
    <location>
        <begin position="116"/>
        <end position="121"/>
    </location>
    <ligand>
        <name>ATP</name>
        <dbReference type="ChEBI" id="CHEBI:30616"/>
    </ligand>
</feature>
<feature type="binding site" evidence="1">
    <location>
        <begin position="116"/>
        <end position="120"/>
    </location>
    <ligand>
        <name>D-glucose 6-phosphate</name>
        <dbReference type="ChEBI" id="CHEBI:61548"/>
    </ligand>
</feature>
<feature type="binding site" evidence="1">
    <location>
        <begin position="185"/>
        <end position="186"/>
    </location>
    <ligand>
        <name>substrate</name>
    </ligand>
</feature>
<feature type="binding site" evidence="1">
    <location>
        <position position="185"/>
    </location>
    <ligand>
        <name>D-glucose 6-phosphate</name>
        <dbReference type="ChEBI" id="CHEBI:61548"/>
    </ligand>
</feature>
<feature type="binding site" evidence="1">
    <location>
        <begin position="202"/>
        <end position="203"/>
    </location>
    <ligand>
        <name>substrate</name>
    </ligand>
</feature>
<feature type="binding site" evidence="1">
    <location>
        <begin position="238"/>
        <end position="239"/>
    </location>
    <ligand>
        <name>substrate</name>
    </ligand>
</feature>
<feature type="binding site" evidence="1">
    <location>
        <position position="239"/>
    </location>
    <ligand>
        <name>D-glucose 6-phosphate</name>
        <dbReference type="ChEBI" id="CHEBI:61548"/>
    </ligand>
</feature>
<feature type="binding site" evidence="1">
    <location>
        <position position="263"/>
    </location>
    <ligand>
        <name>ATP</name>
        <dbReference type="ChEBI" id="CHEBI:30616"/>
    </ligand>
</feature>
<feature type="binding site" evidence="1">
    <location>
        <position position="263"/>
    </location>
    <ligand>
        <name>D-glucose 6-phosphate</name>
        <dbReference type="ChEBI" id="CHEBI:61548"/>
    </ligand>
</feature>
<feature type="binding site" evidence="1">
    <location>
        <position position="266"/>
    </location>
    <ligand>
        <name>substrate</name>
    </ligand>
</feature>
<feature type="binding site" evidence="1">
    <location>
        <position position="297"/>
    </location>
    <ligand>
        <name>substrate</name>
    </ligand>
</feature>
<feature type="binding site" evidence="1">
    <location>
        <position position="331"/>
    </location>
    <ligand>
        <name>substrate</name>
    </ligand>
</feature>
<feature type="binding site" evidence="1">
    <location>
        <begin position="336"/>
        <end position="337"/>
    </location>
    <ligand>
        <name>ATP</name>
        <dbReference type="ChEBI" id="CHEBI:30616"/>
    </ligand>
</feature>
<feature type="binding site" evidence="1">
    <location>
        <begin position="373"/>
        <end position="377"/>
    </location>
    <ligand>
        <name>ATP</name>
        <dbReference type="ChEBI" id="CHEBI:30616"/>
    </ligand>
</feature>
<feature type="binding site" evidence="1">
    <location>
        <begin position="446"/>
        <end position="448"/>
    </location>
    <ligand>
        <name>D-glucose 6-phosphate</name>
        <dbReference type="ChEBI" id="CHEBI:61548"/>
    </ligand>
</feature>
<feature type="binding site" evidence="1">
    <location>
        <begin position="448"/>
        <end position="452"/>
    </location>
    <ligand>
        <name>ATP</name>
        <dbReference type="ChEBI" id="CHEBI:30616"/>
    </ligand>
</feature>
<feature type="binding site" evidence="1">
    <location>
        <position position="483"/>
    </location>
    <ligand>
        <name>D-glucose 6-phosphate</name>
        <dbReference type="ChEBI" id="CHEBI:61548"/>
    </ligand>
</feature>
<feature type="sequence conflict" description="In Ref. 1; AAR13363." evidence="7" ref="1">
    <original>T</original>
    <variation>S</variation>
    <location>
        <position position="68"/>
    </location>
</feature>
<feature type="sequence conflict" description="In Ref. 1; AAR13363." evidence="7" ref="1">
    <original>G</original>
    <variation>S</variation>
    <location>
        <position position="172"/>
    </location>
</feature>
<feature type="sequence conflict" description="In Ref. 1; AAR13363." evidence="7" ref="1">
    <location>
        <begin position="504"/>
        <end position="509"/>
    </location>
</feature>
<comment type="function">
    <text evidence="5">Active against glucose, fructose, mannose, maltose and galactose.</text>
</comment>
<comment type="catalytic activity">
    <reaction evidence="3 5">
        <text>a D-hexose + ATP = a D-hexose 6-phosphate + ADP + H(+)</text>
        <dbReference type="Rhea" id="RHEA:22740"/>
        <dbReference type="ChEBI" id="CHEBI:4194"/>
        <dbReference type="ChEBI" id="CHEBI:15378"/>
        <dbReference type="ChEBI" id="CHEBI:30616"/>
        <dbReference type="ChEBI" id="CHEBI:229467"/>
        <dbReference type="ChEBI" id="CHEBI:456216"/>
        <dbReference type="EC" id="2.7.1.1"/>
    </reaction>
    <physiologicalReaction direction="left-to-right" evidence="5">
        <dbReference type="Rhea" id="RHEA:22741"/>
    </physiologicalReaction>
</comment>
<comment type="catalytic activity">
    <reaction evidence="5">
        <text>D-mannose + ATP = D-mannose 6-phosphate + ADP + H(+)</text>
        <dbReference type="Rhea" id="RHEA:11028"/>
        <dbReference type="ChEBI" id="CHEBI:4208"/>
        <dbReference type="ChEBI" id="CHEBI:15378"/>
        <dbReference type="ChEBI" id="CHEBI:30616"/>
        <dbReference type="ChEBI" id="CHEBI:58735"/>
        <dbReference type="ChEBI" id="CHEBI:456216"/>
        <dbReference type="EC" id="2.7.1.1"/>
    </reaction>
    <physiologicalReaction direction="left-to-right" evidence="5">
        <dbReference type="Rhea" id="RHEA:11029"/>
    </physiologicalReaction>
</comment>
<comment type="catalytic activity">
    <reaction evidence="5">
        <text>D-fructose + ATP = D-fructose 6-phosphate + ADP + H(+)</text>
        <dbReference type="Rhea" id="RHEA:16125"/>
        <dbReference type="ChEBI" id="CHEBI:15378"/>
        <dbReference type="ChEBI" id="CHEBI:30616"/>
        <dbReference type="ChEBI" id="CHEBI:37721"/>
        <dbReference type="ChEBI" id="CHEBI:61527"/>
        <dbReference type="ChEBI" id="CHEBI:456216"/>
        <dbReference type="EC" id="2.7.1.1"/>
    </reaction>
    <physiologicalReaction direction="left-to-right" evidence="5">
        <dbReference type="Rhea" id="RHEA:16126"/>
    </physiologicalReaction>
</comment>
<comment type="catalytic activity">
    <reaction evidence="5">
        <text>D-glucose + ATP = D-glucose 6-phosphate + ADP + H(+)</text>
        <dbReference type="Rhea" id="RHEA:17825"/>
        <dbReference type="ChEBI" id="CHEBI:4167"/>
        <dbReference type="ChEBI" id="CHEBI:15378"/>
        <dbReference type="ChEBI" id="CHEBI:30616"/>
        <dbReference type="ChEBI" id="CHEBI:61548"/>
        <dbReference type="ChEBI" id="CHEBI:456216"/>
        <dbReference type="EC" id="2.7.1.1"/>
    </reaction>
    <physiologicalReaction direction="left-to-right" evidence="5">
        <dbReference type="Rhea" id="RHEA:17826"/>
    </physiologicalReaction>
</comment>
<comment type="activity regulation">
    <text evidence="5">Activated by glucose-6-phosphate. Inhibited by N-acetylglucosamine, glucosamine, mannoheptulose and ADP.</text>
</comment>
<comment type="biophysicochemical properties">
    <kinetics>
        <KM evidence="5">0.035 mM for glucose</KM>
        <KM evidence="5">75 mM for fructose</KM>
        <KM evidence="5">1.09 mM for ATP</KM>
    </kinetics>
    <phDependence>
        <text evidence="5">Optimum pH is 8.4.</text>
    </phDependence>
</comment>
<comment type="pathway">
    <text evidence="5">Carbohydrate metabolism; hexose metabolism.</text>
</comment>
<comment type="pathway">
    <text evidence="5">Carbohydrate degradation; glycolysis; D-glyceraldehyde 3-phosphate and glycerone phosphate from D-glucose: step 1/4.</text>
</comment>
<comment type="similarity">
    <text evidence="2 3 4">Belongs to the hexokinase family.</text>
</comment>
<accession>A0A0K0JFP3</accession>
<accession>Q56VN6</accession>
<proteinExistence type="evidence at protein level"/>
<keyword id="KW-0067">ATP-binding</keyword>
<keyword id="KW-0324">Glycolysis</keyword>
<keyword id="KW-0418">Kinase</keyword>
<keyword id="KW-0547">Nucleotide-binding</keyword>
<keyword id="KW-1185">Reference proteome</keyword>
<keyword id="KW-0808">Transferase</keyword>